<feature type="chain" id="PRO_0000374849" description="Ribosomal protein uS12 methylthiotransferase RimO">
    <location>
        <begin position="1"/>
        <end position="450"/>
    </location>
</feature>
<feature type="domain" description="MTTase N-terminal" evidence="1">
    <location>
        <begin position="9"/>
        <end position="124"/>
    </location>
</feature>
<feature type="domain" description="Radical SAM core" evidence="2">
    <location>
        <begin position="134"/>
        <end position="365"/>
    </location>
</feature>
<feature type="domain" description="TRAM" evidence="1">
    <location>
        <begin position="367"/>
        <end position="434"/>
    </location>
</feature>
<feature type="binding site" evidence="1">
    <location>
        <position position="18"/>
    </location>
    <ligand>
        <name>[4Fe-4S] cluster</name>
        <dbReference type="ChEBI" id="CHEBI:49883"/>
        <label>1</label>
    </ligand>
</feature>
<feature type="binding site" evidence="1">
    <location>
        <position position="53"/>
    </location>
    <ligand>
        <name>[4Fe-4S] cluster</name>
        <dbReference type="ChEBI" id="CHEBI:49883"/>
        <label>1</label>
    </ligand>
</feature>
<feature type="binding site" evidence="1">
    <location>
        <position position="87"/>
    </location>
    <ligand>
        <name>[4Fe-4S] cluster</name>
        <dbReference type="ChEBI" id="CHEBI:49883"/>
        <label>1</label>
    </ligand>
</feature>
<feature type="binding site" evidence="1">
    <location>
        <position position="148"/>
    </location>
    <ligand>
        <name>[4Fe-4S] cluster</name>
        <dbReference type="ChEBI" id="CHEBI:49883"/>
        <label>2</label>
        <note>4Fe-4S-S-AdoMet</note>
    </ligand>
</feature>
<feature type="binding site" evidence="1">
    <location>
        <position position="152"/>
    </location>
    <ligand>
        <name>[4Fe-4S] cluster</name>
        <dbReference type="ChEBI" id="CHEBI:49883"/>
        <label>2</label>
        <note>4Fe-4S-S-AdoMet</note>
    </ligand>
</feature>
<feature type="binding site" evidence="1">
    <location>
        <position position="155"/>
    </location>
    <ligand>
        <name>[4Fe-4S] cluster</name>
        <dbReference type="ChEBI" id="CHEBI:49883"/>
        <label>2</label>
        <note>4Fe-4S-S-AdoMet</note>
    </ligand>
</feature>
<protein>
    <recommendedName>
        <fullName evidence="1">Ribosomal protein uS12 methylthiotransferase RimO</fullName>
        <shortName evidence="1">uS12 MTTase</shortName>
        <shortName evidence="1">uS12 methylthiotransferase</shortName>
        <ecNumber evidence="1">2.8.4.4</ecNumber>
    </recommendedName>
    <alternativeName>
        <fullName evidence="1">Ribosomal protein uS12 (aspartate-C(3))-methylthiotransferase</fullName>
    </alternativeName>
    <alternativeName>
        <fullName evidence="1">Ribosome maturation factor RimO</fullName>
    </alternativeName>
</protein>
<sequence length="450" mass="51704">MRTKSLKKNRINVVTLGCSKNVYDSEILMGQLKANDKDVVHEEDGNIVVINTCGFIDNAKEQSVNTILEFVEKKQQGDVDKVFVTGCLSERYKPDLQKEIPDVDQYFGTTELPGLLSALEADYKHELIGERLTTTPKNYAYLKIAEGCDRPCSFCAIPLMRGGHKSTPIENLVTEAEKLAANGVKELILIAQDLTYYGLDLYKKRNLAELLENLVKVEGIEWIRLHYAFPTGFPMDVLEVMKREPKVCNYLDIPLQHISDDLLKSMRRGTTHEKTTKLLKEFRKTVPEMAIRTTLIVGYPGETEEHYQELKEWVKEMRFERLGCFTYSHEENTHAYNLEDDVPQEVKQERANEIMEIQSQISWELNQQKIGEVFNVVIDRKEGNYFIGRTEYDSPDVDNEVLIDATTVYLKTGDYYDVKIAEAADFDLYGEPLNVTTEKPKRKELKIKSV</sequence>
<comment type="function">
    <text evidence="1">Catalyzes the methylthiolation of an aspartic acid residue of ribosomal protein uS12.</text>
</comment>
<comment type="catalytic activity">
    <reaction evidence="1">
        <text>L-aspartate(89)-[ribosomal protein uS12]-hydrogen + (sulfur carrier)-SH + AH2 + 2 S-adenosyl-L-methionine = 3-methylsulfanyl-L-aspartate(89)-[ribosomal protein uS12]-hydrogen + (sulfur carrier)-H + 5'-deoxyadenosine + L-methionine + A + S-adenosyl-L-homocysteine + 2 H(+)</text>
        <dbReference type="Rhea" id="RHEA:37087"/>
        <dbReference type="Rhea" id="RHEA-COMP:10460"/>
        <dbReference type="Rhea" id="RHEA-COMP:10461"/>
        <dbReference type="Rhea" id="RHEA-COMP:14737"/>
        <dbReference type="Rhea" id="RHEA-COMP:14739"/>
        <dbReference type="ChEBI" id="CHEBI:13193"/>
        <dbReference type="ChEBI" id="CHEBI:15378"/>
        <dbReference type="ChEBI" id="CHEBI:17319"/>
        <dbReference type="ChEBI" id="CHEBI:17499"/>
        <dbReference type="ChEBI" id="CHEBI:29917"/>
        <dbReference type="ChEBI" id="CHEBI:29961"/>
        <dbReference type="ChEBI" id="CHEBI:57844"/>
        <dbReference type="ChEBI" id="CHEBI:57856"/>
        <dbReference type="ChEBI" id="CHEBI:59789"/>
        <dbReference type="ChEBI" id="CHEBI:64428"/>
        <dbReference type="ChEBI" id="CHEBI:73599"/>
        <dbReference type="EC" id="2.8.4.4"/>
    </reaction>
</comment>
<comment type="cofactor">
    <cofactor evidence="1">
        <name>[4Fe-4S] cluster</name>
        <dbReference type="ChEBI" id="CHEBI:49883"/>
    </cofactor>
    <text evidence="1">Binds 2 [4Fe-4S] clusters. One cluster is coordinated with 3 cysteines and an exchangeable S-adenosyl-L-methionine.</text>
</comment>
<comment type="subcellular location">
    <subcellularLocation>
        <location evidence="1">Cytoplasm</location>
    </subcellularLocation>
</comment>
<comment type="similarity">
    <text evidence="1">Belongs to the methylthiotransferase family. RimO subfamily.</text>
</comment>
<accession>A0M3K8</accession>
<gene>
    <name evidence="1" type="primary">rimO</name>
    <name type="ordered locus">GFO_2238</name>
</gene>
<name>RIMO_CHRFK</name>
<organism>
    <name type="scientific">Christiangramia forsetii (strain DSM 17595 / CGMCC 1.15422 / KT0803)</name>
    <name type="common">Gramella forsetii</name>
    <dbReference type="NCBI Taxonomy" id="411154"/>
    <lineage>
        <taxon>Bacteria</taxon>
        <taxon>Pseudomonadati</taxon>
        <taxon>Bacteroidota</taxon>
        <taxon>Flavobacteriia</taxon>
        <taxon>Flavobacteriales</taxon>
        <taxon>Flavobacteriaceae</taxon>
        <taxon>Christiangramia</taxon>
    </lineage>
</organism>
<reference key="1">
    <citation type="journal article" date="2006" name="Environ. Microbiol.">
        <title>Whole genome analysis of the marine Bacteroidetes'Gramella forsetii' reveals adaptations to degradation of polymeric organic matter.</title>
        <authorList>
            <person name="Bauer M."/>
            <person name="Kube M."/>
            <person name="Teeling H."/>
            <person name="Richter M."/>
            <person name="Lombardot T."/>
            <person name="Allers E."/>
            <person name="Wuerdemann C.A."/>
            <person name="Quast C."/>
            <person name="Kuhl H."/>
            <person name="Knaust F."/>
            <person name="Woebken D."/>
            <person name="Bischof K."/>
            <person name="Mussmann M."/>
            <person name="Choudhuri J.V."/>
            <person name="Meyer F."/>
            <person name="Reinhardt R."/>
            <person name="Amann R.I."/>
            <person name="Gloeckner F.O."/>
        </authorList>
    </citation>
    <scope>NUCLEOTIDE SEQUENCE [LARGE SCALE GENOMIC DNA]</scope>
    <source>
        <strain>DSM 17595 / CGMCC 1.15422 / KT0803</strain>
    </source>
</reference>
<evidence type="ECO:0000255" key="1">
    <source>
        <dbReference type="HAMAP-Rule" id="MF_01865"/>
    </source>
</evidence>
<evidence type="ECO:0000255" key="2">
    <source>
        <dbReference type="PROSITE-ProRule" id="PRU01266"/>
    </source>
</evidence>
<keyword id="KW-0004">4Fe-4S</keyword>
<keyword id="KW-0963">Cytoplasm</keyword>
<keyword id="KW-0408">Iron</keyword>
<keyword id="KW-0411">Iron-sulfur</keyword>
<keyword id="KW-0479">Metal-binding</keyword>
<keyword id="KW-0949">S-adenosyl-L-methionine</keyword>
<keyword id="KW-0808">Transferase</keyword>
<dbReference type="EC" id="2.8.4.4" evidence="1"/>
<dbReference type="EMBL" id="CU207366">
    <property type="protein sequence ID" value="CAL67203.1"/>
    <property type="molecule type" value="Genomic_DNA"/>
</dbReference>
<dbReference type="RefSeq" id="WP_011710106.1">
    <property type="nucleotide sequence ID" value="NC_008571.1"/>
</dbReference>
<dbReference type="SMR" id="A0M3K8"/>
<dbReference type="STRING" id="411154.GFO_2238"/>
<dbReference type="KEGG" id="gfo:GFO_2238"/>
<dbReference type="eggNOG" id="COG0621">
    <property type="taxonomic scope" value="Bacteria"/>
</dbReference>
<dbReference type="HOGENOM" id="CLU_018697_0_1_10"/>
<dbReference type="OrthoDB" id="9805215at2"/>
<dbReference type="Proteomes" id="UP000000755">
    <property type="component" value="Chromosome"/>
</dbReference>
<dbReference type="GO" id="GO:0005829">
    <property type="term" value="C:cytosol"/>
    <property type="evidence" value="ECO:0007669"/>
    <property type="project" value="TreeGrafter"/>
</dbReference>
<dbReference type="GO" id="GO:0051539">
    <property type="term" value="F:4 iron, 4 sulfur cluster binding"/>
    <property type="evidence" value="ECO:0007669"/>
    <property type="project" value="UniProtKB-UniRule"/>
</dbReference>
<dbReference type="GO" id="GO:0035599">
    <property type="term" value="F:aspartic acid methylthiotransferase activity"/>
    <property type="evidence" value="ECO:0007669"/>
    <property type="project" value="TreeGrafter"/>
</dbReference>
<dbReference type="GO" id="GO:0046872">
    <property type="term" value="F:metal ion binding"/>
    <property type="evidence" value="ECO:0007669"/>
    <property type="project" value="UniProtKB-KW"/>
</dbReference>
<dbReference type="GO" id="GO:0103039">
    <property type="term" value="F:protein methylthiotransferase activity"/>
    <property type="evidence" value="ECO:0007669"/>
    <property type="project" value="UniProtKB-EC"/>
</dbReference>
<dbReference type="GO" id="GO:0006400">
    <property type="term" value="P:tRNA modification"/>
    <property type="evidence" value="ECO:0007669"/>
    <property type="project" value="InterPro"/>
</dbReference>
<dbReference type="CDD" id="cd01335">
    <property type="entry name" value="Radical_SAM"/>
    <property type="match status" value="1"/>
</dbReference>
<dbReference type="FunFam" id="3.80.30.20:FF:000001">
    <property type="entry name" value="tRNA-2-methylthio-N(6)-dimethylallyladenosine synthase 2"/>
    <property type="match status" value="1"/>
</dbReference>
<dbReference type="Gene3D" id="3.40.50.12160">
    <property type="entry name" value="Methylthiotransferase, N-terminal domain"/>
    <property type="match status" value="1"/>
</dbReference>
<dbReference type="Gene3D" id="2.40.50.140">
    <property type="entry name" value="Nucleic acid-binding proteins"/>
    <property type="match status" value="1"/>
</dbReference>
<dbReference type="Gene3D" id="3.80.30.20">
    <property type="entry name" value="tm_1862 like domain"/>
    <property type="match status" value="1"/>
</dbReference>
<dbReference type="HAMAP" id="MF_01865">
    <property type="entry name" value="MTTase_RimO"/>
    <property type="match status" value="1"/>
</dbReference>
<dbReference type="InterPro" id="IPR006638">
    <property type="entry name" value="Elp3/MiaA/NifB-like_rSAM"/>
</dbReference>
<dbReference type="InterPro" id="IPR005839">
    <property type="entry name" value="Methylthiotransferase"/>
</dbReference>
<dbReference type="InterPro" id="IPR020612">
    <property type="entry name" value="Methylthiotransferase_CS"/>
</dbReference>
<dbReference type="InterPro" id="IPR013848">
    <property type="entry name" value="Methylthiotransferase_N"/>
</dbReference>
<dbReference type="InterPro" id="IPR038135">
    <property type="entry name" value="Methylthiotransferase_N_sf"/>
</dbReference>
<dbReference type="InterPro" id="IPR012340">
    <property type="entry name" value="NA-bd_OB-fold"/>
</dbReference>
<dbReference type="InterPro" id="IPR005840">
    <property type="entry name" value="Ribosomal_uS12_MeSTrfase_RimO"/>
</dbReference>
<dbReference type="InterPro" id="IPR007197">
    <property type="entry name" value="rSAM"/>
</dbReference>
<dbReference type="InterPro" id="IPR023404">
    <property type="entry name" value="rSAM_horseshoe"/>
</dbReference>
<dbReference type="InterPro" id="IPR002792">
    <property type="entry name" value="TRAM_dom"/>
</dbReference>
<dbReference type="NCBIfam" id="TIGR01125">
    <property type="entry name" value="30S ribosomal protein S12 methylthiotransferase RimO"/>
    <property type="match status" value="1"/>
</dbReference>
<dbReference type="NCBIfam" id="TIGR00089">
    <property type="entry name" value="MiaB/RimO family radical SAM methylthiotransferase"/>
    <property type="match status" value="1"/>
</dbReference>
<dbReference type="PANTHER" id="PTHR43837">
    <property type="entry name" value="RIBOSOMAL PROTEIN S12 METHYLTHIOTRANSFERASE RIMO"/>
    <property type="match status" value="1"/>
</dbReference>
<dbReference type="PANTHER" id="PTHR43837:SF1">
    <property type="entry name" value="RIBOSOMAL PROTEIN US12 METHYLTHIOTRANSFERASE RIMO"/>
    <property type="match status" value="1"/>
</dbReference>
<dbReference type="Pfam" id="PF04055">
    <property type="entry name" value="Radical_SAM"/>
    <property type="match status" value="1"/>
</dbReference>
<dbReference type="Pfam" id="PF18693">
    <property type="entry name" value="TRAM_2"/>
    <property type="match status" value="1"/>
</dbReference>
<dbReference type="Pfam" id="PF00919">
    <property type="entry name" value="UPF0004"/>
    <property type="match status" value="1"/>
</dbReference>
<dbReference type="SFLD" id="SFLDG01082">
    <property type="entry name" value="B12-binding_domain_containing"/>
    <property type="match status" value="1"/>
</dbReference>
<dbReference type="SFLD" id="SFLDS00029">
    <property type="entry name" value="Radical_SAM"/>
    <property type="match status" value="1"/>
</dbReference>
<dbReference type="SFLD" id="SFLDF00274">
    <property type="entry name" value="ribosomal_protein_S12_methylth"/>
    <property type="match status" value="1"/>
</dbReference>
<dbReference type="SMART" id="SM00729">
    <property type="entry name" value="Elp3"/>
    <property type="match status" value="1"/>
</dbReference>
<dbReference type="SUPFAM" id="SSF102114">
    <property type="entry name" value="Radical SAM enzymes"/>
    <property type="match status" value="1"/>
</dbReference>
<dbReference type="PROSITE" id="PS51449">
    <property type="entry name" value="MTTASE_N"/>
    <property type="match status" value="1"/>
</dbReference>
<dbReference type="PROSITE" id="PS01278">
    <property type="entry name" value="MTTASE_RADICAL"/>
    <property type="match status" value="1"/>
</dbReference>
<dbReference type="PROSITE" id="PS51918">
    <property type="entry name" value="RADICAL_SAM"/>
    <property type="match status" value="1"/>
</dbReference>
<dbReference type="PROSITE" id="PS50926">
    <property type="entry name" value="TRAM"/>
    <property type="match status" value="1"/>
</dbReference>
<proteinExistence type="inferred from homology"/>